<sequence>GCCSDPRCRYRC</sequence>
<proteinExistence type="evidence at protein level"/>
<accession>P85011</accession>
<dbReference type="ConoServer" id="30">
    <property type="toxin name" value="RgIA [P6O,del13]"/>
</dbReference>
<dbReference type="GO" id="GO:0005576">
    <property type="term" value="C:extracellular region"/>
    <property type="evidence" value="ECO:0007669"/>
    <property type="project" value="UniProtKB-SubCell"/>
</dbReference>
<dbReference type="GO" id="GO:0035792">
    <property type="term" value="C:host cell postsynaptic membrane"/>
    <property type="evidence" value="ECO:0007669"/>
    <property type="project" value="UniProtKB-KW"/>
</dbReference>
<dbReference type="GO" id="GO:0030550">
    <property type="term" value="F:acetylcholine receptor inhibitor activity"/>
    <property type="evidence" value="ECO:0007669"/>
    <property type="project" value="UniProtKB-KW"/>
</dbReference>
<dbReference type="GO" id="GO:0099106">
    <property type="term" value="F:ion channel regulator activity"/>
    <property type="evidence" value="ECO:0007669"/>
    <property type="project" value="UniProtKB-KW"/>
</dbReference>
<dbReference type="GO" id="GO:0090729">
    <property type="term" value="F:toxin activity"/>
    <property type="evidence" value="ECO:0007669"/>
    <property type="project" value="UniProtKB-KW"/>
</dbReference>
<dbReference type="InterPro" id="IPR018072">
    <property type="entry name" value="Conotoxin_a-typ_CS"/>
</dbReference>
<dbReference type="PROSITE" id="PS60014">
    <property type="entry name" value="ALPHA_CONOTOXIN"/>
    <property type="match status" value="1"/>
</dbReference>
<name>CA1E_CONRE</name>
<keyword id="KW-0008">Acetylcholine receptor inhibiting toxin</keyword>
<keyword id="KW-0027">Amidation</keyword>
<keyword id="KW-0903">Direct protein sequencing</keyword>
<keyword id="KW-1015">Disulfide bond</keyword>
<keyword id="KW-0379">Hydroxylation</keyword>
<keyword id="KW-0872">Ion channel impairing toxin</keyword>
<keyword id="KW-0528">Neurotoxin</keyword>
<keyword id="KW-0629">Postsynaptic neurotoxin</keyword>
<keyword id="KW-0964">Secreted</keyword>
<keyword id="KW-0800">Toxin</keyword>
<feature type="peptide" id="PRO_0000259387" description="Alpha-conotoxin-like Reg1e" evidence="3">
    <location>
        <begin position="1"/>
        <end position="12"/>
    </location>
</feature>
<feature type="modified residue" description="4-hydroxyproline" evidence="3">
    <location>
        <position position="6"/>
    </location>
</feature>
<feature type="modified residue" description="Cysteine amide" evidence="3">
    <location>
        <position position="12"/>
    </location>
</feature>
<feature type="disulfide bond" evidence="1">
    <location>
        <begin position="2"/>
        <end position="8"/>
    </location>
</feature>
<feature type="disulfide bond" evidence="1">
    <location>
        <begin position="3"/>
        <end position="12"/>
    </location>
</feature>
<reference key="1">
    <citation type="journal article" date="2006" name="Prog. Mol. Subcell. Biol.">
        <title>Hyperhydroxylation: a new strategy for neuronal targeting by venomous marine molluscs.</title>
        <authorList>
            <person name="Franco A."/>
            <person name="Pisarewicz K."/>
            <person name="Moller C."/>
            <person name="Mora D."/>
            <person name="Fields G.B."/>
            <person name="Mari F."/>
        </authorList>
    </citation>
    <scope>PROTEIN SEQUENCE</scope>
    <scope>SUBCELLULAR LOCATION</scope>
    <scope>TISSUE SPECIFICITY</scope>
    <scope>HYDROXYLATION AT PRO-6</scope>
    <scope>AMIDATION AT CYS-12</scope>
    <source>
        <tissue>Venom</tissue>
    </source>
</reference>
<organism>
    <name type="scientific">Conus regius</name>
    <name type="common">Crown cone</name>
    <dbReference type="NCBI Taxonomy" id="101314"/>
    <lineage>
        <taxon>Eukaryota</taxon>
        <taxon>Metazoa</taxon>
        <taxon>Spiralia</taxon>
        <taxon>Lophotrochozoa</taxon>
        <taxon>Mollusca</taxon>
        <taxon>Gastropoda</taxon>
        <taxon>Caenogastropoda</taxon>
        <taxon>Neogastropoda</taxon>
        <taxon>Conoidea</taxon>
        <taxon>Conidae</taxon>
        <taxon>Conus</taxon>
        <taxon>Stephanoconus</taxon>
    </lineage>
</organism>
<comment type="function">
    <text evidence="2">Alpha-conotoxins act on postsynaptic membranes, they bind to the nicotinic acetylcholine receptors (nAChR) and thus inhibit them.</text>
</comment>
<comment type="subcellular location">
    <subcellularLocation>
        <location evidence="3">Secreted</location>
    </subcellularLocation>
</comment>
<comment type="tissue specificity">
    <text evidence="3">Expressed by the venom duct.</text>
</comment>
<comment type="domain">
    <text evidence="5">The cysteine framework is I (CC-C-C). Alpha4/3 pattern.</text>
</comment>
<comment type="similarity">
    <text evidence="5">Belongs to the conotoxin A superfamily.</text>
</comment>
<comment type="caution">
    <text evidence="5">Has the same mature sequence than RgIA (AC P0C1D0). RgIA could therefore be the precursor of Reg1e, except that RgIA does not have the C-terminal Gly residue required for C-terminal amidation of Reg1e.</text>
</comment>
<protein>
    <recommendedName>
        <fullName evidence="4">Alpha-conotoxin-like Reg1e</fullName>
    </recommendedName>
</protein>
<evidence type="ECO:0000250" key="1">
    <source>
        <dbReference type="UniProtKB" id="P0C1D0"/>
    </source>
</evidence>
<evidence type="ECO:0000250" key="2">
    <source>
        <dbReference type="UniProtKB" id="P50983"/>
    </source>
</evidence>
<evidence type="ECO:0000269" key="3">
    <source>
    </source>
</evidence>
<evidence type="ECO:0000303" key="4">
    <source>
    </source>
</evidence>
<evidence type="ECO:0000305" key="5"/>